<comment type="function">
    <text evidence="1">Binds directly to 23S rRNA. The L1 stalk is quite mobile in the ribosome, and is involved in E site tRNA release.</text>
</comment>
<comment type="function">
    <text evidence="1">Protein L1 is also a translational repressor protein, it controls the translation of the L11 operon by binding to its mRNA.</text>
</comment>
<comment type="subunit">
    <text evidence="1">Part of the 50S ribosomal subunit.</text>
</comment>
<comment type="similarity">
    <text evidence="1">Belongs to the universal ribosomal protein uL1 family.</text>
</comment>
<dbReference type="EMBL" id="CP000909">
    <property type="protein sequence ID" value="ABY35397.1"/>
    <property type="molecule type" value="Genomic_DNA"/>
</dbReference>
<dbReference type="RefSeq" id="WP_012258051.1">
    <property type="nucleotide sequence ID" value="NC_010175.1"/>
</dbReference>
<dbReference type="RefSeq" id="YP_001635786.1">
    <property type="nucleotide sequence ID" value="NC_010175.1"/>
</dbReference>
<dbReference type="SMR" id="A9WFP7"/>
<dbReference type="FunCoup" id="A9WFP7">
    <property type="interactions" value="536"/>
</dbReference>
<dbReference type="STRING" id="324602.Caur_2186"/>
<dbReference type="EnsemblBacteria" id="ABY35397">
    <property type="protein sequence ID" value="ABY35397"/>
    <property type="gene ID" value="Caur_2186"/>
</dbReference>
<dbReference type="KEGG" id="cau:Caur_2186"/>
<dbReference type="PATRIC" id="fig|324602.8.peg.2473"/>
<dbReference type="eggNOG" id="COG0081">
    <property type="taxonomic scope" value="Bacteria"/>
</dbReference>
<dbReference type="HOGENOM" id="CLU_062853_0_0_0"/>
<dbReference type="InParanoid" id="A9WFP7"/>
<dbReference type="Proteomes" id="UP000002008">
    <property type="component" value="Chromosome"/>
</dbReference>
<dbReference type="GO" id="GO:0015934">
    <property type="term" value="C:large ribosomal subunit"/>
    <property type="evidence" value="ECO:0007669"/>
    <property type="project" value="InterPro"/>
</dbReference>
<dbReference type="GO" id="GO:0019843">
    <property type="term" value="F:rRNA binding"/>
    <property type="evidence" value="ECO:0007669"/>
    <property type="project" value="UniProtKB-UniRule"/>
</dbReference>
<dbReference type="GO" id="GO:0003735">
    <property type="term" value="F:structural constituent of ribosome"/>
    <property type="evidence" value="ECO:0007669"/>
    <property type="project" value="InterPro"/>
</dbReference>
<dbReference type="GO" id="GO:0000049">
    <property type="term" value="F:tRNA binding"/>
    <property type="evidence" value="ECO:0007669"/>
    <property type="project" value="UniProtKB-KW"/>
</dbReference>
<dbReference type="GO" id="GO:0006417">
    <property type="term" value="P:regulation of translation"/>
    <property type="evidence" value="ECO:0007669"/>
    <property type="project" value="UniProtKB-KW"/>
</dbReference>
<dbReference type="GO" id="GO:0006412">
    <property type="term" value="P:translation"/>
    <property type="evidence" value="ECO:0007669"/>
    <property type="project" value="UniProtKB-UniRule"/>
</dbReference>
<dbReference type="CDD" id="cd00403">
    <property type="entry name" value="Ribosomal_L1"/>
    <property type="match status" value="1"/>
</dbReference>
<dbReference type="FunFam" id="3.40.50.790:FF:000001">
    <property type="entry name" value="50S ribosomal protein L1"/>
    <property type="match status" value="1"/>
</dbReference>
<dbReference type="Gene3D" id="3.30.190.20">
    <property type="match status" value="1"/>
</dbReference>
<dbReference type="Gene3D" id="3.40.50.790">
    <property type="match status" value="1"/>
</dbReference>
<dbReference type="HAMAP" id="MF_01318_B">
    <property type="entry name" value="Ribosomal_uL1_B"/>
    <property type="match status" value="1"/>
</dbReference>
<dbReference type="InterPro" id="IPR005878">
    <property type="entry name" value="Ribosom_uL1_bac-type"/>
</dbReference>
<dbReference type="InterPro" id="IPR002143">
    <property type="entry name" value="Ribosomal_uL1"/>
</dbReference>
<dbReference type="InterPro" id="IPR023674">
    <property type="entry name" value="Ribosomal_uL1-like"/>
</dbReference>
<dbReference type="InterPro" id="IPR028364">
    <property type="entry name" value="Ribosomal_uL1/biogenesis"/>
</dbReference>
<dbReference type="InterPro" id="IPR016095">
    <property type="entry name" value="Ribosomal_uL1_3-a/b-sand"/>
</dbReference>
<dbReference type="InterPro" id="IPR023673">
    <property type="entry name" value="Ribosomal_uL1_CS"/>
</dbReference>
<dbReference type="NCBIfam" id="TIGR01169">
    <property type="entry name" value="rplA_bact"/>
    <property type="match status" value="1"/>
</dbReference>
<dbReference type="PANTHER" id="PTHR36427">
    <property type="entry name" value="54S RIBOSOMAL PROTEIN L1, MITOCHONDRIAL"/>
    <property type="match status" value="1"/>
</dbReference>
<dbReference type="PANTHER" id="PTHR36427:SF3">
    <property type="entry name" value="LARGE RIBOSOMAL SUBUNIT PROTEIN UL1M"/>
    <property type="match status" value="1"/>
</dbReference>
<dbReference type="Pfam" id="PF00687">
    <property type="entry name" value="Ribosomal_L1"/>
    <property type="match status" value="1"/>
</dbReference>
<dbReference type="PIRSF" id="PIRSF002155">
    <property type="entry name" value="Ribosomal_L1"/>
    <property type="match status" value="1"/>
</dbReference>
<dbReference type="SUPFAM" id="SSF56808">
    <property type="entry name" value="Ribosomal protein L1"/>
    <property type="match status" value="1"/>
</dbReference>
<dbReference type="PROSITE" id="PS01199">
    <property type="entry name" value="RIBOSOMAL_L1"/>
    <property type="match status" value="1"/>
</dbReference>
<organism>
    <name type="scientific">Chloroflexus aurantiacus (strain ATCC 29366 / DSM 635 / J-10-fl)</name>
    <dbReference type="NCBI Taxonomy" id="324602"/>
    <lineage>
        <taxon>Bacteria</taxon>
        <taxon>Bacillati</taxon>
        <taxon>Chloroflexota</taxon>
        <taxon>Chloroflexia</taxon>
        <taxon>Chloroflexales</taxon>
        <taxon>Chloroflexineae</taxon>
        <taxon>Chloroflexaceae</taxon>
        <taxon>Chloroflexus</taxon>
    </lineage>
</organism>
<accession>A9WFP7</accession>
<name>RL1_CHLAA</name>
<reference key="1">
    <citation type="journal article" date="2011" name="BMC Genomics">
        <title>Complete genome sequence of the filamentous anoxygenic phototrophic bacterium Chloroflexus aurantiacus.</title>
        <authorList>
            <person name="Tang K.H."/>
            <person name="Barry K."/>
            <person name="Chertkov O."/>
            <person name="Dalin E."/>
            <person name="Han C.S."/>
            <person name="Hauser L.J."/>
            <person name="Honchak B.M."/>
            <person name="Karbach L.E."/>
            <person name="Land M.L."/>
            <person name="Lapidus A."/>
            <person name="Larimer F.W."/>
            <person name="Mikhailova N."/>
            <person name="Pitluck S."/>
            <person name="Pierson B.K."/>
            <person name="Blankenship R.E."/>
        </authorList>
    </citation>
    <scope>NUCLEOTIDE SEQUENCE [LARGE SCALE GENOMIC DNA]</scope>
    <source>
        <strain>ATCC 29366 / DSM 635 / J-10-fl</strain>
    </source>
</reference>
<gene>
    <name evidence="1" type="primary">rplA</name>
    <name type="ordered locus">Caur_2186</name>
</gene>
<sequence>MPKHGKKYLAALAKVDRTRLYSPTEALALVKETSYTKFDGTVEAHLRLGIDPRHADQNIRTTVALPHGTGKTVRVLVFAQGEAVQAALDAGADYAGSDDLIARIDRENFFDFDVAIATPDMMGKVGRIGRKLGPRGLMPNPKSGTIVPAADLARTIREVKGGRVEIRNDKTGILHVAIGKVSFTPQQLSENFVALMDAVKAAKPSGAKGTYIRSVTLTSTMGPGVPVDPVAAQNLKA</sequence>
<evidence type="ECO:0000255" key="1">
    <source>
        <dbReference type="HAMAP-Rule" id="MF_01318"/>
    </source>
</evidence>
<evidence type="ECO:0000305" key="2"/>
<protein>
    <recommendedName>
        <fullName evidence="1">Large ribosomal subunit protein uL1</fullName>
    </recommendedName>
    <alternativeName>
        <fullName evidence="2">50S ribosomal protein L1</fullName>
    </alternativeName>
</protein>
<keyword id="KW-1185">Reference proteome</keyword>
<keyword id="KW-0678">Repressor</keyword>
<keyword id="KW-0687">Ribonucleoprotein</keyword>
<keyword id="KW-0689">Ribosomal protein</keyword>
<keyword id="KW-0694">RNA-binding</keyword>
<keyword id="KW-0699">rRNA-binding</keyword>
<keyword id="KW-0810">Translation regulation</keyword>
<keyword id="KW-0820">tRNA-binding</keyword>
<proteinExistence type="inferred from homology"/>
<feature type="chain" id="PRO_1000086276" description="Large ribosomal subunit protein uL1">
    <location>
        <begin position="1"/>
        <end position="237"/>
    </location>
</feature>